<proteinExistence type="evidence at protein level"/>
<evidence type="ECO:0000250" key="1"/>
<evidence type="ECO:0000250" key="2">
    <source>
        <dbReference type="UniProtKB" id="Q923M0"/>
    </source>
</evidence>
<evidence type="ECO:0000255" key="3"/>
<evidence type="ECO:0000256" key="4">
    <source>
        <dbReference type="SAM" id="MobiDB-lite"/>
    </source>
</evidence>
<evidence type="ECO:0000305" key="5"/>
<evidence type="ECO:0007744" key="6">
    <source>
    </source>
</evidence>
<keyword id="KW-0040">ANK repeat</keyword>
<keyword id="KW-1003">Cell membrane</keyword>
<keyword id="KW-0175">Coiled coil</keyword>
<keyword id="KW-0449">Lipoprotein</keyword>
<keyword id="KW-0472">Membrane</keyword>
<keyword id="KW-0488">Methylation</keyword>
<keyword id="KW-0564">Palmitate</keyword>
<keyword id="KW-0597">Phosphoprotein</keyword>
<keyword id="KW-0636">Prenylation</keyword>
<keyword id="KW-1267">Proteomics identification</keyword>
<keyword id="KW-1185">Reference proteome</keyword>
<keyword id="KW-0677">Repeat</keyword>
<protein>
    <recommendedName>
        <fullName>Protein phosphatase 1 regulatory subunit 16A</fullName>
    </recommendedName>
    <alternativeName>
        <fullName>Myosin phosphatase-targeting subunit 3</fullName>
    </alternativeName>
</protein>
<name>PP16A_HUMAN</name>
<comment type="function">
    <text evidence="1">Inhibits protein phosphatase 1 activity toward phosphorylase, myosin light chain and myosin substrates.</text>
</comment>
<comment type="subunit">
    <text>Binds PP1.</text>
</comment>
<comment type="interaction">
    <interactant intactId="EBI-710402">
        <id>Q96I34</id>
    </interactant>
    <interactant intactId="EBI-713602">
        <id>Q9BQD7</id>
        <label>ANTKMT</label>
    </interactant>
    <organismsDiffer>false</organismsDiffer>
    <experiments>3</experiments>
</comment>
<comment type="interaction">
    <interactant intactId="EBI-710402">
        <id>Q96I34</id>
    </interactant>
    <interactant intactId="EBI-21535880">
        <id>Q92870-2</id>
        <label>APBB2</label>
    </interactant>
    <organismsDiffer>false</organismsDiffer>
    <experiments>3</experiments>
</comment>
<comment type="interaction">
    <interactant intactId="EBI-710402">
        <id>Q96I34</id>
    </interactant>
    <interactant intactId="EBI-12811889">
        <id>Q9Y6H3</id>
        <label>ATP23</label>
    </interactant>
    <organismsDiffer>false</organismsDiffer>
    <experiments>3</experiments>
</comment>
<comment type="interaction">
    <interactant intactId="EBI-710402">
        <id>Q96I34</id>
    </interactant>
    <interactant intactId="EBI-8640233">
        <id>Q5T686</id>
        <label>AVPI1</label>
    </interactant>
    <organismsDiffer>false</organismsDiffer>
    <experiments>3</experiments>
</comment>
<comment type="interaction">
    <interactant intactId="EBI-710402">
        <id>Q96I34</id>
    </interactant>
    <interactant intactId="EBI-742695">
        <id>Q8N1L9</id>
        <label>BATF2</label>
    </interactant>
    <organismsDiffer>false</organismsDiffer>
    <experiments>3</experiments>
</comment>
<comment type="interaction">
    <interactant intactId="EBI-710402">
        <id>Q96I34</id>
    </interactant>
    <interactant intactId="EBI-747505">
        <id>Q8TAB5</id>
        <label>C1orf216</label>
    </interactant>
    <organismsDiffer>false</organismsDiffer>
    <experiments>3</experiments>
</comment>
<comment type="interaction">
    <interactant intactId="EBI-710402">
        <id>Q96I34</id>
    </interactant>
    <interactant intactId="EBI-18036948">
        <id>Q3SXR2</id>
        <label>C3orf36</label>
    </interactant>
    <organismsDiffer>false</organismsDiffer>
    <experiments>3</experiments>
</comment>
<comment type="interaction">
    <interactant intactId="EBI-710402">
        <id>Q96I34</id>
    </interactant>
    <interactant intactId="EBI-744311">
        <id>Q8IYX3</id>
        <label>CCDC116</label>
    </interactant>
    <organismsDiffer>false</organismsDiffer>
    <experiments>3</experiments>
</comment>
<comment type="interaction">
    <interactant intactId="EBI-710402">
        <id>Q96I34</id>
    </interactant>
    <interactant intactId="EBI-5278764">
        <id>Q96GN5</id>
        <label>CDCA7L</label>
    </interactant>
    <organismsDiffer>false</organismsDiffer>
    <experiments>3</experiments>
</comment>
<comment type="interaction">
    <interactant intactId="EBI-710402">
        <id>Q96I34</id>
    </interactant>
    <interactant intactId="EBI-25837549">
        <id>P28329-3</id>
        <label>CHAT</label>
    </interactant>
    <organismsDiffer>false</organismsDiffer>
    <experiments>3</experiments>
</comment>
<comment type="interaction">
    <interactant intactId="EBI-710402">
        <id>Q96I34</id>
    </interactant>
    <interactant intactId="EBI-1050662">
        <id>P12532</id>
        <label>CKMT1B</label>
    </interactant>
    <organismsDiffer>false</organismsDiffer>
    <experiments>3</experiments>
</comment>
<comment type="interaction">
    <interactant intactId="EBI-710402">
        <id>Q96I34</id>
    </interactant>
    <interactant intactId="EBI-348399">
        <id>P22607</id>
        <label>FGFR3</label>
    </interactant>
    <organismsDiffer>false</organismsDiffer>
    <experiments>3</experiments>
</comment>
<comment type="interaction">
    <interactant intactId="EBI-710402">
        <id>Q96I34</id>
    </interactant>
    <interactant intactId="EBI-744302">
        <id>P14136</id>
        <label>GFAP</label>
    </interactant>
    <organismsDiffer>false</organismsDiffer>
    <experiments>3</experiments>
</comment>
<comment type="interaction">
    <interactant intactId="EBI-710402">
        <id>Q96I34</id>
    </interactant>
    <interactant intactId="EBI-351506">
        <id>P06396</id>
        <label>GSN</label>
    </interactant>
    <organismsDiffer>false</organismsDiffer>
    <experiments>3</experiments>
</comment>
<comment type="interaction">
    <interactant intactId="EBI-710402">
        <id>Q96I34</id>
    </interactant>
    <interactant intactId="EBI-12094670">
        <id>Q8WUI4-6</id>
        <label>HDAC7</label>
    </interactant>
    <organismsDiffer>false</organismsDiffer>
    <experiments>3</experiments>
</comment>
<comment type="interaction">
    <interactant intactId="EBI-710402">
        <id>Q96I34</id>
    </interactant>
    <interactant intactId="EBI-350145">
        <id>P01112</id>
        <label>HRAS</label>
    </interactant>
    <organismsDiffer>false</organismsDiffer>
    <experiments>3</experiments>
</comment>
<comment type="interaction">
    <interactant intactId="EBI-710402">
        <id>Q96I34</id>
    </interactant>
    <interactant intactId="EBI-17178971">
        <id>Q14005-2</id>
        <label>IL16</label>
    </interactant>
    <organismsDiffer>false</organismsDiffer>
    <experiments>3</experiments>
</comment>
<comment type="interaction">
    <interactant intactId="EBI-710402">
        <id>Q96I34</id>
    </interactant>
    <interactant intactId="EBI-1055254">
        <id>Q8WXH2</id>
        <label>JPH3</label>
    </interactant>
    <organismsDiffer>false</organismsDiffer>
    <experiments>3</experiments>
</comment>
<comment type="interaction">
    <interactant intactId="EBI-710402">
        <id>Q96I34</id>
    </interactant>
    <interactant intactId="EBI-399080">
        <id>Q92993</id>
        <label>KAT5</label>
    </interactant>
    <organismsDiffer>false</organismsDiffer>
    <experiments>3</experiments>
</comment>
<comment type="interaction">
    <interactant intactId="EBI-710402">
        <id>Q96I34</id>
    </interactant>
    <interactant intactId="EBI-1048945">
        <id>Q3LI72</id>
        <label>KRTAP19-5</label>
    </interactant>
    <organismsDiffer>false</organismsDiffer>
    <experiments>3</experiments>
</comment>
<comment type="interaction">
    <interactant intactId="EBI-710402">
        <id>Q96I34</id>
    </interactant>
    <interactant intactId="EBI-11987923">
        <id>P59942</id>
        <label>MCCD1</label>
    </interactant>
    <organismsDiffer>false</organismsDiffer>
    <experiments>3</experiments>
</comment>
<comment type="interaction">
    <interactant intactId="EBI-710402">
        <id>Q96I34</id>
    </interactant>
    <interactant intactId="EBI-358272">
        <id>P52815</id>
        <label>MRPL12</label>
    </interactant>
    <organismsDiffer>false</organismsDiffer>
    <experiments>3</experiments>
</comment>
<comment type="interaction">
    <interactant intactId="EBI-710402">
        <id>Q96I34</id>
    </interactant>
    <interactant intactId="EBI-12010196">
        <id>P52179-2</id>
        <label>MYOM1</label>
    </interactant>
    <organismsDiffer>false</organismsDiffer>
    <experiments>3</experiments>
</comment>
<comment type="interaction">
    <interactant intactId="EBI-710402">
        <id>Q96I34</id>
    </interactant>
    <interactant intactId="EBI-1246261">
        <id>O14561</id>
        <label>NDUFAB1</label>
    </interactant>
    <organismsDiffer>false</organismsDiffer>
    <experiments>3</experiments>
</comment>
<comment type="interaction">
    <interactant intactId="EBI-710402">
        <id>Q96I34</id>
    </interactant>
    <interactant intactId="EBI-713665">
        <id>P19404</id>
        <label>NDUFV2</label>
    </interactant>
    <organismsDiffer>false</organismsDiffer>
    <experiments>3</experiments>
</comment>
<comment type="interaction">
    <interactant intactId="EBI-710402">
        <id>Q96I34</id>
    </interactant>
    <interactant intactId="EBI-11750983">
        <id>Q9HC98-4</id>
        <label>NEK6</label>
    </interactant>
    <organismsDiffer>false</organismsDiffer>
    <experiments>3</experiments>
</comment>
<comment type="interaction">
    <interactant intactId="EBI-710402">
        <id>Q96I34</id>
    </interactant>
    <interactant intactId="EBI-1391623">
        <id>P29474</id>
        <label>NOS3</label>
    </interactant>
    <organismsDiffer>false</organismsDiffer>
    <experiments>3</experiments>
</comment>
<comment type="interaction">
    <interactant intactId="EBI-710402">
        <id>Q96I34</id>
    </interactant>
    <interactant intactId="EBI-591778">
        <id>P61970</id>
        <label>NUTF2</label>
    </interactant>
    <organismsDiffer>false</organismsDiffer>
    <experiments>3</experiments>
</comment>
<comment type="interaction">
    <interactant intactId="EBI-710402">
        <id>Q96I34</id>
    </interactant>
    <interactant intactId="EBI-50433196">
        <id>A0A6Q8PF08</id>
        <label>PMP22</label>
    </interactant>
    <organismsDiffer>false</organismsDiffer>
    <experiments>3</experiments>
</comment>
<comment type="interaction">
    <interactant intactId="EBI-710402">
        <id>Q96I34</id>
    </interactant>
    <interactant intactId="EBI-352350">
        <id>P62140</id>
        <label>PPP1CB</label>
    </interactant>
    <organismsDiffer>false</organismsDiffer>
    <experiments>10</experiments>
</comment>
<comment type="interaction">
    <interactant intactId="EBI-710402">
        <id>Q96I34</id>
    </interactant>
    <interactant intactId="EBI-356283">
        <id>P36873</id>
        <label>PPP1CC</label>
    </interactant>
    <organismsDiffer>false</organismsDiffer>
    <experiments>3</experiments>
</comment>
<comment type="interaction">
    <interactant intactId="EBI-710402">
        <id>Q96I34</id>
    </interactant>
    <interactant intactId="EBI-1053424">
        <id>O43741</id>
        <label>PRKAB2</label>
    </interactant>
    <organismsDiffer>false</organismsDiffer>
    <experiments>3</experiments>
</comment>
<comment type="interaction">
    <interactant intactId="EBI-710402">
        <id>Q96I34</id>
    </interactant>
    <interactant intactId="EBI-1567797">
        <id>Q8WWY3</id>
        <label>PRPF31</label>
    </interactant>
    <organismsDiffer>false</organismsDiffer>
    <experiments>3</experiments>
</comment>
<comment type="interaction">
    <interactant intactId="EBI-710402">
        <id>Q96I34</id>
    </interactant>
    <interactant intactId="EBI-1053259">
        <id>Q9UHX1</id>
        <label>PUF60</label>
    </interactant>
    <organismsDiffer>false</organismsDiffer>
    <experiments>2</experiments>
</comment>
<comment type="interaction">
    <interactant intactId="EBI-710402">
        <id>Q96I34</id>
    </interactant>
    <interactant intactId="EBI-748391">
        <id>Q9BWG6</id>
        <label>SCNM1</label>
    </interactant>
    <organismsDiffer>false</organismsDiffer>
    <experiments>3</experiments>
</comment>
<comment type="interaction">
    <interactant intactId="EBI-710402">
        <id>Q96I34</id>
    </interactant>
    <interactant intactId="EBI-349968">
        <id>O43463</id>
        <label>SUV39H1</label>
    </interactant>
    <organismsDiffer>false</organismsDiffer>
    <experiments>3</experiments>
</comment>
<comment type="interaction">
    <interactant intactId="EBI-710402">
        <id>Q96I34</id>
    </interactant>
    <interactant intactId="EBI-717810">
        <id>Q08117</id>
        <label>TLE5</label>
    </interactant>
    <organismsDiffer>false</organismsDiffer>
    <experiments>3</experiments>
</comment>
<comment type="interaction">
    <interactant intactId="EBI-710402">
        <id>Q96I34</id>
    </interactant>
    <interactant intactId="EBI-1044672">
        <id>P29144</id>
        <label>TPP2</label>
    </interactant>
    <organismsDiffer>false</organismsDiffer>
    <experiments>4</experiments>
</comment>
<comment type="interaction">
    <interactant intactId="EBI-710402">
        <id>Q96I34</id>
    </interactant>
    <interactant intactId="EBI-742327">
        <id>Q15654</id>
        <label>TRIP6</label>
    </interactant>
    <organismsDiffer>false</organismsDiffer>
    <experiments>3</experiments>
</comment>
<comment type="interaction">
    <interactant intactId="EBI-710402">
        <id>Q96I34</id>
    </interactant>
    <interactant intactId="EBI-3918381">
        <id>Q96PN8</id>
        <label>TSSK3</label>
    </interactant>
    <organismsDiffer>false</organismsDiffer>
    <experiments>3</experiments>
</comment>
<comment type="interaction">
    <interactant intactId="EBI-710402">
        <id>Q96I34</id>
    </interactant>
    <interactant intactId="EBI-9090990">
        <id>Q5W5X9-3</id>
        <label>TTC23</label>
    </interactant>
    <organismsDiffer>false</organismsDiffer>
    <experiments>3</experiments>
</comment>
<comment type="interaction">
    <interactant intactId="EBI-710402">
        <id>Q96I34</id>
    </interactant>
    <interactant intactId="EBI-741480">
        <id>Q9UMX0</id>
        <label>UBQLN1</label>
    </interactant>
    <organismsDiffer>false</organismsDiffer>
    <experiments>3</experiments>
</comment>
<comment type="interaction">
    <interactant intactId="EBI-710402">
        <id>Q96I34</id>
    </interactant>
    <interactant intactId="EBI-12817837">
        <id>Q9H9P5-5</id>
        <label>UNKL</label>
    </interactant>
    <organismsDiffer>false</organismsDiffer>
    <experiments>3</experiments>
</comment>
<comment type="interaction">
    <interactant intactId="EBI-710402">
        <id>Q96I34</id>
    </interactant>
    <interactant intactId="EBI-8656416">
        <id>Q68DK2-5</id>
        <label>ZFYVE26</label>
    </interactant>
    <organismsDiffer>false</organismsDiffer>
    <experiments>3</experiments>
</comment>
<comment type="interaction">
    <interactant intactId="EBI-710402">
        <id>Q96I34</id>
    </interactant>
    <interactant intactId="EBI-744257">
        <id>Q96IQ9</id>
        <label>ZNF414</label>
    </interactant>
    <organismsDiffer>false</organismsDiffer>
    <experiments>3</experiments>
</comment>
<comment type="subcellular location">
    <subcellularLocation>
        <location evidence="1">Cell membrane</location>
        <topology evidence="1">Lipid-anchor</topology>
    </subcellularLocation>
</comment>
<comment type="sequence caution" evidence="5">
    <conflict type="miscellaneous discrepancy">
        <sequence resource="EMBL-CDS" id="BAC03452"/>
    </conflict>
    <text>Cloning artifact.</text>
</comment>
<gene>
    <name type="primary">PPP1R16A</name>
    <name type="synonym">MYPT3</name>
</gene>
<accession>Q96I34</accession>
<accession>D3DWM5</accession>
<reference key="1">
    <citation type="submission" date="2002-07" db="EMBL/GenBank/DDBJ databases">
        <title>The nucleotide sequence of a long cDNA clone isolated from human spleen.</title>
        <authorList>
            <person name="Jikuya H."/>
            <person name="Takano J."/>
            <person name="Kikuno R."/>
            <person name="Nagase T."/>
            <person name="Ohara O."/>
        </authorList>
    </citation>
    <scope>NUCLEOTIDE SEQUENCE [LARGE SCALE MRNA]</scope>
    <source>
        <tissue>Spleen</tissue>
    </source>
</reference>
<reference key="2">
    <citation type="submission" date="2003-05" db="EMBL/GenBank/DDBJ databases">
        <title>Cloning of human full-length CDSs in BD Creator(TM) system donor vector.</title>
        <authorList>
            <person name="Kalnine N."/>
            <person name="Chen X."/>
            <person name="Rolfs A."/>
            <person name="Halleck A."/>
            <person name="Hines L."/>
            <person name="Eisenstein S."/>
            <person name="Koundinya M."/>
            <person name="Raphael J."/>
            <person name="Moreira D."/>
            <person name="Kelley T."/>
            <person name="LaBaer J."/>
            <person name="Lin Y."/>
            <person name="Phelan M."/>
            <person name="Farmer A."/>
        </authorList>
    </citation>
    <scope>NUCLEOTIDE SEQUENCE [LARGE SCALE MRNA]</scope>
</reference>
<reference key="3">
    <citation type="submission" date="2005-09" db="EMBL/GenBank/DDBJ databases">
        <authorList>
            <person name="Mural R.J."/>
            <person name="Istrail S."/>
            <person name="Sutton G.G."/>
            <person name="Florea L."/>
            <person name="Halpern A.L."/>
            <person name="Mobarry C.M."/>
            <person name="Lippert R."/>
            <person name="Walenz B."/>
            <person name="Shatkay H."/>
            <person name="Dew I."/>
            <person name="Miller J.R."/>
            <person name="Flanigan M.J."/>
            <person name="Edwards N.J."/>
            <person name="Bolanos R."/>
            <person name="Fasulo D."/>
            <person name="Halldorsson B.V."/>
            <person name="Hannenhalli S."/>
            <person name="Turner R."/>
            <person name="Yooseph S."/>
            <person name="Lu F."/>
            <person name="Nusskern D.R."/>
            <person name="Shue B.C."/>
            <person name="Zheng X.H."/>
            <person name="Zhong F."/>
            <person name="Delcher A.L."/>
            <person name="Huson D.H."/>
            <person name="Kravitz S.A."/>
            <person name="Mouchard L."/>
            <person name="Reinert K."/>
            <person name="Remington K.A."/>
            <person name="Clark A.G."/>
            <person name="Waterman M.S."/>
            <person name="Eichler E.E."/>
            <person name="Adams M.D."/>
            <person name="Hunkapiller M.W."/>
            <person name="Myers E.W."/>
            <person name="Venter J.C."/>
        </authorList>
    </citation>
    <scope>NUCLEOTIDE SEQUENCE [LARGE SCALE GENOMIC DNA]</scope>
</reference>
<reference key="4">
    <citation type="journal article" date="2004" name="Genome Res.">
        <title>The status, quality, and expansion of the NIH full-length cDNA project: the Mammalian Gene Collection (MGC).</title>
        <authorList>
            <consortium name="The MGC Project Team"/>
        </authorList>
    </citation>
    <scope>NUCLEOTIDE SEQUENCE [LARGE SCALE MRNA]</scope>
    <source>
        <tissue>Lung</tissue>
        <tissue>Placenta</tissue>
        <tissue>Uterus</tissue>
    </source>
</reference>
<reference key="5">
    <citation type="journal article" date="2013" name="J. Proteome Res.">
        <title>Toward a comprehensive characterization of a human cancer cell phosphoproteome.</title>
        <authorList>
            <person name="Zhou H."/>
            <person name="Di Palma S."/>
            <person name="Preisinger C."/>
            <person name="Peng M."/>
            <person name="Polat A.N."/>
            <person name="Heck A.J."/>
            <person name="Mohammed S."/>
        </authorList>
    </citation>
    <scope>PHOSPHORYLATION [LARGE SCALE ANALYSIS] AT SER-433</scope>
    <scope>IDENTIFICATION BY MASS SPECTROMETRY [LARGE SCALE ANALYSIS]</scope>
    <source>
        <tissue>Cervix carcinoma</tissue>
        <tissue>Erythroleukemia</tissue>
    </source>
</reference>
<sequence length="528" mass="57811">MAEHLELLAEMPMVGRMSTQERLKHAQKRRAQQVKMWAQAEKEAQGKKGPGERPRKEAASQGLLKQVLFPPSVVLLEAAARNDLEEVRQFLGSGVSPDLANEDGLTALHQCCIDDFREMVQQLLEAGANINACDSECWTPLHAAATCGHLHLVELLIASGANLLAVNTDGNMPYDLCDDEQTLDCLETAMADRGITQDSIEAARAVPELRMLDDIRSRLQAGADLHAPLDHGATLLHVAAANGFSEAAALLLEHRASLSAKDQDGWEPLHAAAYWGQVPLVELLVAHGADLNAKSLMDETPLDVCGDEEVRAKLLELKHKHDALLRAQSRQRSLLRRRTSSAGSRGKVVRRVSLTQRTDLYRKQHAQEAIVWQQPPPTSPEPPEDNDDRQTGAELRPPPPEEDNPEVVRPHNGRVGGSPVRHLYSKRLDRSVSYQLSPLDSTTPHTLVHDKAHHTLADLKRQRAAAKLQRPPPEGPESPETAEPGLPGDTVTPQPDCGFRAGGDPPLLKLTAPAVEAPVERRPCCLLM</sequence>
<feature type="chain" id="PRO_0000067040" description="Protein phosphatase 1 regulatory subunit 16A">
    <location>
        <begin position="1"/>
        <end position="525"/>
    </location>
</feature>
<feature type="propeptide" id="PRO_0000396707" description="Removed in mature form" evidence="3">
    <location>
        <begin position="526"/>
        <end position="528"/>
    </location>
</feature>
<feature type="repeat" description="ANK 1">
    <location>
        <begin position="70"/>
        <end position="99"/>
    </location>
</feature>
<feature type="repeat" description="ANK 2">
    <location>
        <begin position="103"/>
        <end position="132"/>
    </location>
</feature>
<feature type="repeat" description="ANK 3">
    <location>
        <begin position="136"/>
        <end position="165"/>
    </location>
</feature>
<feature type="repeat" description="ANK 4">
    <location>
        <begin position="231"/>
        <end position="260"/>
    </location>
</feature>
<feature type="repeat" description="ANK 5">
    <location>
        <begin position="264"/>
        <end position="293"/>
    </location>
</feature>
<feature type="region of interest" description="Disordered" evidence="4">
    <location>
        <begin position="19"/>
        <end position="59"/>
    </location>
</feature>
<feature type="region of interest" description="Disordered" evidence="4">
    <location>
        <begin position="330"/>
        <end position="351"/>
    </location>
</feature>
<feature type="region of interest" description="Disordered" evidence="4">
    <location>
        <begin position="367"/>
        <end position="421"/>
    </location>
</feature>
<feature type="region of interest" description="Disordered" evidence="4">
    <location>
        <begin position="462"/>
        <end position="505"/>
    </location>
</feature>
<feature type="coiled-coil region" evidence="3">
    <location>
        <begin position="18"/>
        <end position="45"/>
    </location>
</feature>
<feature type="compositionally biased region" description="Basic and acidic residues" evidence="4">
    <location>
        <begin position="40"/>
        <end position="58"/>
    </location>
</feature>
<feature type="modified residue" description="Phosphoserine" evidence="6">
    <location>
        <position position="433"/>
    </location>
</feature>
<feature type="modified residue" description="Cysteine methyl ester" evidence="2">
    <location>
        <position position="525"/>
    </location>
</feature>
<feature type="lipid moiety-binding region" description="S-palmitoyl cysteine" evidence="5">
    <location>
        <position position="524"/>
    </location>
</feature>
<feature type="lipid moiety-binding region" description="S-farnesyl cysteine" evidence="2">
    <location>
        <position position="525"/>
    </location>
</feature>
<feature type="sequence conflict" description="In Ref. 1; BAC03452." evidence="5" ref="1">
    <location>
        <begin position="34"/>
        <end position="71"/>
    </location>
</feature>
<feature type="sequence conflict" description="In Ref. 1; BAC03452." evidence="5" ref="1">
    <original>A</original>
    <variation>P</variation>
    <location>
        <position position="249"/>
    </location>
</feature>
<feature type="sequence conflict" description="In Ref. 1; BAC03452." evidence="5" ref="1">
    <original>A</original>
    <variation>P</variation>
    <location>
        <position position="272"/>
    </location>
</feature>
<dbReference type="EMBL" id="AK090471">
    <property type="protein sequence ID" value="BAC03452.1"/>
    <property type="status" value="ALT_SEQ"/>
    <property type="molecule type" value="mRNA"/>
</dbReference>
<dbReference type="EMBL" id="BT006845">
    <property type="protein sequence ID" value="AAP35491.1"/>
    <property type="molecule type" value="mRNA"/>
</dbReference>
<dbReference type="EMBL" id="CH471162">
    <property type="protein sequence ID" value="EAW82080.1"/>
    <property type="molecule type" value="Genomic_DNA"/>
</dbReference>
<dbReference type="EMBL" id="CH471162">
    <property type="protein sequence ID" value="EAW82081.1"/>
    <property type="molecule type" value="Genomic_DNA"/>
</dbReference>
<dbReference type="EMBL" id="CH471162">
    <property type="protein sequence ID" value="EAW82082.1"/>
    <property type="molecule type" value="Genomic_DNA"/>
</dbReference>
<dbReference type="EMBL" id="BC007854">
    <property type="protein sequence ID" value="AAH07854.1"/>
    <property type="molecule type" value="mRNA"/>
</dbReference>
<dbReference type="EMBL" id="BC049841">
    <property type="protein sequence ID" value="AAH49841.1"/>
    <property type="molecule type" value="mRNA"/>
</dbReference>
<dbReference type="EMBL" id="BC053506">
    <property type="protein sequence ID" value="AAH53506.1"/>
    <property type="molecule type" value="mRNA"/>
</dbReference>
<dbReference type="CCDS" id="CCDS6429.1"/>
<dbReference type="RefSeq" id="NP_001316371.1">
    <property type="nucleotide sequence ID" value="NM_001329442.2"/>
</dbReference>
<dbReference type="RefSeq" id="NP_001316372.1">
    <property type="nucleotide sequence ID" value="NM_001329443.2"/>
</dbReference>
<dbReference type="RefSeq" id="NP_001316373.1">
    <property type="nucleotide sequence ID" value="NM_001329444.2"/>
</dbReference>
<dbReference type="RefSeq" id="NP_001316374.1">
    <property type="nucleotide sequence ID" value="NM_001329445.2"/>
</dbReference>
<dbReference type="RefSeq" id="NP_116291.1">
    <property type="nucleotide sequence ID" value="NM_032902.7"/>
</dbReference>
<dbReference type="RefSeq" id="XP_016869403.1">
    <property type="nucleotide sequence ID" value="XM_017013914.1"/>
</dbReference>
<dbReference type="RefSeq" id="XP_047278299.1">
    <property type="nucleotide sequence ID" value="XM_047422343.1"/>
</dbReference>
<dbReference type="RefSeq" id="XP_047278301.1">
    <property type="nucleotide sequence ID" value="XM_047422345.1"/>
</dbReference>
<dbReference type="RefSeq" id="XP_047278302.1">
    <property type="nucleotide sequence ID" value="XM_047422346.1"/>
</dbReference>
<dbReference type="RefSeq" id="XP_054217369.1">
    <property type="nucleotide sequence ID" value="XM_054361394.1"/>
</dbReference>
<dbReference type="RefSeq" id="XP_054217370.1">
    <property type="nucleotide sequence ID" value="XM_054361395.1"/>
</dbReference>
<dbReference type="SMR" id="Q96I34"/>
<dbReference type="BioGRID" id="124414">
    <property type="interactions" value="59"/>
</dbReference>
<dbReference type="ELM" id="Q96I34"/>
<dbReference type="FunCoup" id="Q96I34">
    <property type="interactions" value="805"/>
</dbReference>
<dbReference type="IntAct" id="Q96I34">
    <property type="interactions" value="63"/>
</dbReference>
<dbReference type="MINT" id="Q96I34"/>
<dbReference type="STRING" id="9606.ENSP00000292539"/>
<dbReference type="GlyCosmos" id="Q96I34">
    <property type="glycosylation" value="1 site, 1 glycan"/>
</dbReference>
<dbReference type="GlyGen" id="Q96I34">
    <property type="glycosylation" value="2 sites, 1 O-linked glycan (1 site)"/>
</dbReference>
<dbReference type="iPTMnet" id="Q96I34"/>
<dbReference type="PhosphoSitePlus" id="Q96I34"/>
<dbReference type="SwissPalm" id="Q96I34"/>
<dbReference type="BioMuta" id="PPP1R16A"/>
<dbReference type="DMDM" id="22256976"/>
<dbReference type="jPOST" id="Q96I34"/>
<dbReference type="MassIVE" id="Q96I34"/>
<dbReference type="PaxDb" id="9606-ENSP00000292539"/>
<dbReference type="PeptideAtlas" id="Q96I34"/>
<dbReference type="ProteomicsDB" id="76809"/>
<dbReference type="Pumba" id="Q96I34"/>
<dbReference type="Antibodypedia" id="14950">
    <property type="antibodies" value="93 antibodies from 22 providers"/>
</dbReference>
<dbReference type="DNASU" id="84988"/>
<dbReference type="Ensembl" id="ENST00000292539.8">
    <property type="protein sequence ID" value="ENSP00000292539.4"/>
    <property type="gene ID" value="ENSG00000160972.10"/>
</dbReference>
<dbReference type="Ensembl" id="ENST00000435887.2">
    <property type="protein sequence ID" value="ENSP00000391126.1"/>
    <property type="gene ID" value="ENSG00000160972.10"/>
</dbReference>
<dbReference type="GeneID" id="84988"/>
<dbReference type="KEGG" id="hsa:84988"/>
<dbReference type="MANE-Select" id="ENST00000435887.2">
    <property type="protein sequence ID" value="ENSP00000391126.1"/>
    <property type="RefSeq nucleotide sequence ID" value="NM_001329443.2"/>
    <property type="RefSeq protein sequence ID" value="NP_001316372.1"/>
</dbReference>
<dbReference type="UCSC" id="uc003zdd.4">
    <property type="organism name" value="human"/>
</dbReference>
<dbReference type="AGR" id="HGNC:14941"/>
<dbReference type="CTD" id="84988"/>
<dbReference type="DisGeNET" id="84988"/>
<dbReference type="GeneCards" id="PPP1R16A"/>
<dbReference type="HGNC" id="HGNC:14941">
    <property type="gene designation" value="PPP1R16A"/>
</dbReference>
<dbReference type="HPA" id="ENSG00000160972">
    <property type="expression patterns" value="Low tissue specificity"/>
</dbReference>
<dbReference type="MIM" id="609172">
    <property type="type" value="gene"/>
</dbReference>
<dbReference type="neXtProt" id="NX_Q96I34"/>
<dbReference type="OpenTargets" id="ENSG00000160972"/>
<dbReference type="PharmGKB" id="PA33634"/>
<dbReference type="VEuPathDB" id="HostDB:ENSG00000160972"/>
<dbReference type="eggNOG" id="KOG0505">
    <property type="taxonomic scope" value="Eukaryota"/>
</dbReference>
<dbReference type="GeneTree" id="ENSGT00940000154090"/>
<dbReference type="HOGENOM" id="CLU_000134_54_2_1"/>
<dbReference type="InParanoid" id="Q96I34"/>
<dbReference type="OMA" id="WGQVHLA"/>
<dbReference type="OrthoDB" id="19014at2759"/>
<dbReference type="PAN-GO" id="Q96I34">
    <property type="GO annotations" value="4 GO annotations based on evolutionary models"/>
</dbReference>
<dbReference type="PhylomeDB" id="Q96I34"/>
<dbReference type="TreeFam" id="TF316803"/>
<dbReference type="PathwayCommons" id="Q96I34"/>
<dbReference type="SignaLink" id="Q96I34"/>
<dbReference type="BioGRID-ORCS" id="84988">
    <property type="hits" value="15 hits in 1155 CRISPR screens"/>
</dbReference>
<dbReference type="ChiTaRS" id="PPP1R16A">
    <property type="organism name" value="human"/>
</dbReference>
<dbReference type="GenomeRNAi" id="84988"/>
<dbReference type="Pharos" id="Q96I34">
    <property type="development level" value="Tdark"/>
</dbReference>
<dbReference type="PRO" id="PR:Q96I34"/>
<dbReference type="Proteomes" id="UP000005640">
    <property type="component" value="Chromosome 8"/>
</dbReference>
<dbReference type="RNAct" id="Q96I34">
    <property type="molecule type" value="protein"/>
</dbReference>
<dbReference type="Bgee" id="ENSG00000160972">
    <property type="expression patterns" value="Expressed in apex of heart and 164 other cell types or tissues"/>
</dbReference>
<dbReference type="ExpressionAtlas" id="Q96I34">
    <property type="expression patterns" value="baseline and differential"/>
</dbReference>
<dbReference type="GO" id="GO:0005737">
    <property type="term" value="C:cytoplasm"/>
    <property type="evidence" value="ECO:0000318"/>
    <property type="project" value="GO_Central"/>
</dbReference>
<dbReference type="GO" id="GO:0005886">
    <property type="term" value="C:plasma membrane"/>
    <property type="evidence" value="ECO:0007669"/>
    <property type="project" value="UniProtKB-SubCell"/>
</dbReference>
<dbReference type="GO" id="GO:0004857">
    <property type="term" value="F:enzyme inhibitor activity"/>
    <property type="evidence" value="ECO:0000318"/>
    <property type="project" value="GO_Central"/>
</dbReference>
<dbReference type="GO" id="GO:0017020">
    <property type="term" value="F:myosin phosphatase regulator activity"/>
    <property type="evidence" value="ECO:0000318"/>
    <property type="project" value="GO_Central"/>
</dbReference>
<dbReference type="FunFam" id="1.25.40.20:FF:000198">
    <property type="entry name" value="Myosin binding subunit, isoform P"/>
    <property type="match status" value="1"/>
</dbReference>
<dbReference type="FunFam" id="1.25.40.20:FF:000079">
    <property type="entry name" value="Protein phosphatase 1 regulatory subunit 16B"/>
    <property type="match status" value="1"/>
</dbReference>
<dbReference type="Gene3D" id="1.25.40.20">
    <property type="entry name" value="Ankyrin repeat-containing domain"/>
    <property type="match status" value="2"/>
</dbReference>
<dbReference type="InterPro" id="IPR002110">
    <property type="entry name" value="Ankyrin_rpt"/>
</dbReference>
<dbReference type="InterPro" id="IPR036770">
    <property type="entry name" value="Ankyrin_rpt-contain_sf"/>
</dbReference>
<dbReference type="InterPro" id="IPR017417">
    <property type="entry name" value="Pase-1_reg_su_16AB"/>
</dbReference>
<dbReference type="InterPro" id="IPR051226">
    <property type="entry name" value="PP1_Regulatory_Subunit"/>
</dbReference>
<dbReference type="PANTHER" id="PTHR24179">
    <property type="entry name" value="PROTEIN PHOSPHATASE 1 REGULATORY SUBUNIT 12"/>
    <property type="match status" value="1"/>
</dbReference>
<dbReference type="PANTHER" id="PTHR24179:SF30">
    <property type="entry name" value="PROTEIN PHOSPHATASE 1 REGULATORY SUBUNIT 16A"/>
    <property type="match status" value="1"/>
</dbReference>
<dbReference type="Pfam" id="PF12796">
    <property type="entry name" value="Ank_2"/>
    <property type="match status" value="2"/>
</dbReference>
<dbReference type="PIRSF" id="PIRSF038159">
    <property type="entry name" value="PP1_16AB_vert"/>
    <property type="match status" value="1"/>
</dbReference>
<dbReference type="PRINTS" id="PR01415">
    <property type="entry name" value="ANKYRIN"/>
</dbReference>
<dbReference type="SMART" id="SM00248">
    <property type="entry name" value="ANK"/>
    <property type="match status" value="4"/>
</dbReference>
<dbReference type="SUPFAM" id="SSF48403">
    <property type="entry name" value="Ankyrin repeat"/>
    <property type="match status" value="1"/>
</dbReference>
<dbReference type="PROSITE" id="PS50297">
    <property type="entry name" value="ANK_REP_REGION"/>
    <property type="match status" value="1"/>
</dbReference>
<dbReference type="PROSITE" id="PS50088">
    <property type="entry name" value="ANK_REPEAT"/>
    <property type="match status" value="4"/>
</dbReference>
<organism>
    <name type="scientific">Homo sapiens</name>
    <name type="common">Human</name>
    <dbReference type="NCBI Taxonomy" id="9606"/>
    <lineage>
        <taxon>Eukaryota</taxon>
        <taxon>Metazoa</taxon>
        <taxon>Chordata</taxon>
        <taxon>Craniata</taxon>
        <taxon>Vertebrata</taxon>
        <taxon>Euteleostomi</taxon>
        <taxon>Mammalia</taxon>
        <taxon>Eutheria</taxon>
        <taxon>Euarchontoglires</taxon>
        <taxon>Primates</taxon>
        <taxon>Haplorrhini</taxon>
        <taxon>Catarrhini</taxon>
        <taxon>Hominidae</taxon>
        <taxon>Homo</taxon>
    </lineage>
</organism>